<organism>
    <name type="scientific">Crassula rupestris subsp. marnieriana</name>
    <name type="common">Pygmyweed</name>
    <name type="synonym">Crassula marnierana</name>
    <dbReference type="NCBI Taxonomy" id="2823420"/>
    <lineage>
        <taxon>Eukaryota</taxon>
        <taxon>Viridiplantae</taxon>
        <taxon>Streptophyta</taxon>
        <taxon>Embryophyta</taxon>
        <taxon>Tracheophyta</taxon>
        <taxon>Spermatophyta</taxon>
        <taxon>Magnoliopsida</taxon>
        <taxon>eudicotyledons</taxon>
        <taxon>Gunneridae</taxon>
        <taxon>Pentapetalae</taxon>
        <taxon>Saxifragales</taxon>
        <taxon>Crassulaceae</taxon>
        <taxon>Crassula</taxon>
    </lineage>
</organism>
<name>RBL_CRARM</name>
<gene>
    <name evidence="1" type="primary">rbcL</name>
</gene>
<dbReference type="EC" id="4.1.1.39" evidence="1"/>
<dbReference type="EMBL" id="L01899">
    <property type="protein sequence ID" value="AAC04879.1"/>
    <property type="molecule type" value="Genomic_DNA"/>
</dbReference>
<dbReference type="SMR" id="P28395"/>
<dbReference type="GO" id="GO:0009507">
    <property type="term" value="C:chloroplast"/>
    <property type="evidence" value="ECO:0007669"/>
    <property type="project" value="UniProtKB-SubCell"/>
</dbReference>
<dbReference type="GO" id="GO:0000287">
    <property type="term" value="F:magnesium ion binding"/>
    <property type="evidence" value="ECO:0007669"/>
    <property type="project" value="InterPro"/>
</dbReference>
<dbReference type="GO" id="GO:0004497">
    <property type="term" value="F:monooxygenase activity"/>
    <property type="evidence" value="ECO:0007669"/>
    <property type="project" value="UniProtKB-KW"/>
</dbReference>
<dbReference type="GO" id="GO:0016984">
    <property type="term" value="F:ribulose-bisphosphate carboxylase activity"/>
    <property type="evidence" value="ECO:0007669"/>
    <property type="project" value="UniProtKB-EC"/>
</dbReference>
<dbReference type="GO" id="GO:0009853">
    <property type="term" value="P:photorespiration"/>
    <property type="evidence" value="ECO:0007669"/>
    <property type="project" value="UniProtKB-KW"/>
</dbReference>
<dbReference type="GO" id="GO:0019253">
    <property type="term" value="P:reductive pentose-phosphate cycle"/>
    <property type="evidence" value="ECO:0007669"/>
    <property type="project" value="UniProtKB-KW"/>
</dbReference>
<dbReference type="CDD" id="cd08212">
    <property type="entry name" value="RuBisCO_large_I"/>
    <property type="match status" value="1"/>
</dbReference>
<dbReference type="FunFam" id="3.20.20.110:FF:000001">
    <property type="entry name" value="Ribulose bisphosphate carboxylase large chain"/>
    <property type="match status" value="1"/>
</dbReference>
<dbReference type="FunFam" id="3.30.70.150:FF:000001">
    <property type="entry name" value="Ribulose bisphosphate carboxylase large chain"/>
    <property type="match status" value="1"/>
</dbReference>
<dbReference type="Gene3D" id="3.20.20.110">
    <property type="entry name" value="Ribulose bisphosphate carboxylase, large subunit, C-terminal domain"/>
    <property type="match status" value="1"/>
</dbReference>
<dbReference type="Gene3D" id="3.30.70.150">
    <property type="entry name" value="RuBisCO large subunit, N-terminal domain"/>
    <property type="match status" value="1"/>
</dbReference>
<dbReference type="HAMAP" id="MF_01338">
    <property type="entry name" value="RuBisCO_L_type1"/>
    <property type="match status" value="1"/>
</dbReference>
<dbReference type="InterPro" id="IPR033966">
    <property type="entry name" value="RuBisCO"/>
</dbReference>
<dbReference type="InterPro" id="IPR020878">
    <property type="entry name" value="RuBisCo_large_chain_AS"/>
</dbReference>
<dbReference type="InterPro" id="IPR000685">
    <property type="entry name" value="RuBisCO_lsu_C"/>
</dbReference>
<dbReference type="InterPro" id="IPR036376">
    <property type="entry name" value="RuBisCO_lsu_C_sf"/>
</dbReference>
<dbReference type="InterPro" id="IPR017443">
    <property type="entry name" value="RuBisCO_lsu_fd_N"/>
</dbReference>
<dbReference type="InterPro" id="IPR036422">
    <property type="entry name" value="RuBisCO_lsu_N_sf"/>
</dbReference>
<dbReference type="InterPro" id="IPR020888">
    <property type="entry name" value="RuBisCO_lsuI"/>
</dbReference>
<dbReference type="NCBIfam" id="NF003252">
    <property type="entry name" value="PRK04208.1"/>
    <property type="match status" value="1"/>
</dbReference>
<dbReference type="PANTHER" id="PTHR42704">
    <property type="entry name" value="RIBULOSE BISPHOSPHATE CARBOXYLASE"/>
    <property type="match status" value="1"/>
</dbReference>
<dbReference type="PANTHER" id="PTHR42704:SF15">
    <property type="entry name" value="RIBULOSE BISPHOSPHATE CARBOXYLASE LARGE CHAIN"/>
    <property type="match status" value="1"/>
</dbReference>
<dbReference type="Pfam" id="PF00016">
    <property type="entry name" value="RuBisCO_large"/>
    <property type="match status" value="1"/>
</dbReference>
<dbReference type="Pfam" id="PF02788">
    <property type="entry name" value="RuBisCO_large_N"/>
    <property type="match status" value="1"/>
</dbReference>
<dbReference type="SFLD" id="SFLDG01052">
    <property type="entry name" value="RuBisCO"/>
    <property type="match status" value="1"/>
</dbReference>
<dbReference type="SFLD" id="SFLDS00014">
    <property type="entry name" value="RuBisCO"/>
    <property type="match status" value="1"/>
</dbReference>
<dbReference type="SFLD" id="SFLDG00301">
    <property type="entry name" value="RuBisCO-like_proteins"/>
    <property type="match status" value="1"/>
</dbReference>
<dbReference type="SUPFAM" id="SSF51649">
    <property type="entry name" value="RuBisCo, C-terminal domain"/>
    <property type="match status" value="1"/>
</dbReference>
<dbReference type="SUPFAM" id="SSF54966">
    <property type="entry name" value="RuBisCO, large subunit, small (N-terminal) domain"/>
    <property type="match status" value="1"/>
</dbReference>
<dbReference type="PROSITE" id="PS00157">
    <property type="entry name" value="RUBISCO_LARGE"/>
    <property type="match status" value="1"/>
</dbReference>
<feature type="chain" id="PRO_0000062426" description="Ribulose bisphosphate carboxylase large chain">
    <location>
        <begin position="1" status="less than"/>
        <end position="450" status="greater than"/>
    </location>
</feature>
<feature type="active site" description="Proton acceptor" evidence="1">
    <location>
        <position position="165"/>
    </location>
</feature>
<feature type="active site" description="Proton acceptor" evidence="1">
    <location>
        <position position="284"/>
    </location>
</feature>
<feature type="binding site" description="in homodimeric partner" evidence="1">
    <location>
        <position position="113"/>
    </location>
    <ligand>
        <name>substrate</name>
    </ligand>
</feature>
<feature type="binding site" evidence="1">
    <location>
        <position position="163"/>
    </location>
    <ligand>
        <name>substrate</name>
    </ligand>
</feature>
<feature type="binding site" evidence="1">
    <location>
        <position position="167"/>
    </location>
    <ligand>
        <name>substrate</name>
    </ligand>
</feature>
<feature type="binding site" description="via carbamate group" evidence="1">
    <location>
        <position position="191"/>
    </location>
    <ligand>
        <name>Mg(2+)</name>
        <dbReference type="ChEBI" id="CHEBI:18420"/>
    </ligand>
</feature>
<feature type="binding site" evidence="1">
    <location>
        <position position="193"/>
    </location>
    <ligand>
        <name>Mg(2+)</name>
        <dbReference type="ChEBI" id="CHEBI:18420"/>
    </ligand>
</feature>
<feature type="binding site" evidence="1">
    <location>
        <position position="194"/>
    </location>
    <ligand>
        <name>Mg(2+)</name>
        <dbReference type="ChEBI" id="CHEBI:18420"/>
    </ligand>
</feature>
<feature type="binding site" evidence="1">
    <location>
        <position position="285"/>
    </location>
    <ligand>
        <name>substrate</name>
    </ligand>
</feature>
<feature type="binding site" evidence="1">
    <location>
        <position position="317"/>
    </location>
    <ligand>
        <name>substrate</name>
    </ligand>
</feature>
<feature type="binding site" evidence="1">
    <location>
        <position position="369"/>
    </location>
    <ligand>
        <name>substrate</name>
    </ligand>
</feature>
<feature type="site" description="Transition state stabilizer" evidence="1">
    <location>
        <position position="324"/>
    </location>
</feature>
<feature type="modified residue" description="N6,N6,N6-trimethyllysine" evidence="1">
    <location>
        <position position="4"/>
    </location>
</feature>
<feature type="modified residue" description="N6-carboxylysine" evidence="1">
    <location>
        <position position="191"/>
    </location>
</feature>
<feature type="disulfide bond" description="Interchain; in linked form" evidence="1">
    <location>
        <position position="237"/>
    </location>
</feature>
<feature type="non-terminal residue">
    <location>
        <position position="1"/>
    </location>
</feature>
<feature type="non-terminal residue">
    <location>
        <position position="450"/>
    </location>
</feature>
<geneLocation type="chloroplast"/>
<comment type="function">
    <text evidence="1">RuBisCO catalyzes two reactions: the carboxylation of D-ribulose 1,5-bisphosphate, the primary event in carbon dioxide fixation, as well as the oxidative fragmentation of the pentose substrate in the photorespiration process. Both reactions occur simultaneously and in competition at the same active site.</text>
</comment>
<comment type="catalytic activity">
    <reaction evidence="1">
        <text>2 (2R)-3-phosphoglycerate + 2 H(+) = D-ribulose 1,5-bisphosphate + CO2 + H2O</text>
        <dbReference type="Rhea" id="RHEA:23124"/>
        <dbReference type="ChEBI" id="CHEBI:15377"/>
        <dbReference type="ChEBI" id="CHEBI:15378"/>
        <dbReference type="ChEBI" id="CHEBI:16526"/>
        <dbReference type="ChEBI" id="CHEBI:57870"/>
        <dbReference type="ChEBI" id="CHEBI:58272"/>
        <dbReference type="EC" id="4.1.1.39"/>
    </reaction>
</comment>
<comment type="catalytic activity">
    <reaction evidence="1">
        <text>D-ribulose 1,5-bisphosphate + O2 = 2-phosphoglycolate + (2R)-3-phosphoglycerate + 2 H(+)</text>
        <dbReference type="Rhea" id="RHEA:36631"/>
        <dbReference type="ChEBI" id="CHEBI:15378"/>
        <dbReference type="ChEBI" id="CHEBI:15379"/>
        <dbReference type="ChEBI" id="CHEBI:57870"/>
        <dbReference type="ChEBI" id="CHEBI:58033"/>
        <dbReference type="ChEBI" id="CHEBI:58272"/>
    </reaction>
</comment>
<comment type="cofactor">
    <cofactor evidence="1">
        <name>Mg(2+)</name>
        <dbReference type="ChEBI" id="CHEBI:18420"/>
    </cofactor>
    <text evidence="1">Binds 1 Mg(2+) ion per subunit.</text>
</comment>
<comment type="subunit">
    <text evidence="1">Heterohexadecamer of 8 large chains and 8 small chains; disulfide-linked. The disulfide link is formed within the large subunit homodimers.</text>
</comment>
<comment type="subcellular location">
    <subcellularLocation>
        <location>Plastid</location>
        <location>Chloroplast</location>
    </subcellularLocation>
</comment>
<comment type="PTM">
    <text evidence="1">The disulfide bond which can form in the large chain dimeric partners within the hexadecamer appears to be associated with oxidative stress and protein turnover.</text>
</comment>
<comment type="miscellaneous">
    <text evidence="1">The basic functional RuBisCO is composed of a large chain homodimer in a 'head-to-tail' conformation. In form I RuBisCO this homodimer is arranged in a barrel-like tetramer with the small subunits forming a tetrameric 'cap' on each end of the 'barrel'.</text>
</comment>
<comment type="similarity">
    <text evidence="1">Belongs to the RuBisCO large chain family. Type I subfamily.</text>
</comment>
<reference key="1">
    <citation type="journal article" date="1992" name="Science">
        <title>Carnivorous plants: phylogeny and structural evolution.</title>
        <authorList>
            <person name="Albert V.A."/>
            <person name="Williams S.E."/>
            <person name="Chase M.W."/>
        </authorList>
    </citation>
    <scope>NUCLEOTIDE SEQUENCE [GENOMIC DNA]</scope>
</reference>
<sequence length="450" mass="49819">VGFKAGVKDYKLTYYTPEYETKDTDILAAFRVTPQPGVPPEEAGAAVAAESSTGTWTTVWTDGLTSLDRYKGRCYHIEPVAGEENQYIAYVAYPLDLFEEGSVTNMFTSIVGNVFGFKALRALRLEDLRIPVAYVKTFQGPPHGIQVERDKLNKYGRPLLGCTIKPKLGLSAKNYGRAVYECLRGGLDFTKDDENVNSQPFMRWRDRFLFCAEAIYKSQAETGEIKGHYLNATAGTCEEMMKRAIFARELGVPIVMHDYLTGGFTANTSLAHYCRDNGLLLHIHRAMHAVIDRQKNHGIHFRVLAKALRMSGGDHIHAGTVVGKLEGERDITLGFVDLLRDDFIEKDRSRGIYFTQDWVSLPGVLPVASGGIHVWHMPALTEIFGDDSVLQFGGGTLGHPWGNAPGAVANRVALEACVQARNEGRDLAREGNEIIREACKWSPELAAACE</sequence>
<keyword id="KW-0113">Calvin cycle</keyword>
<keyword id="KW-0120">Carbon dioxide fixation</keyword>
<keyword id="KW-0150">Chloroplast</keyword>
<keyword id="KW-1015">Disulfide bond</keyword>
<keyword id="KW-0456">Lyase</keyword>
<keyword id="KW-0460">Magnesium</keyword>
<keyword id="KW-0479">Metal-binding</keyword>
<keyword id="KW-0488">Methylation</keyword>
<keyword id="KW-0503">Monooxygenase</keyword>
<keyword id="KW-0560">Oxidoreductase</keyword>
<keyword id="KW-0601">Photorespiration</keyword>
<keyword id="KW-0602">Photosynthesis</keyword>
<keyword id="KW-0934">Plastid</keyword>
<protein>
    <recommendedName>
        <fullName evidence="1">Ribulose bisphosphate carboxylase large chain</fullName>
        <shortName evidence="1">RuBisCO large subunit</shortName>
        <ecNumber evidence="1">4.1.1.39</ecNumber>
    </recommendedName>
</protein>
<accession>P28395</accession>
<proteinExistence type="inferred from homology"/>
<evidence type="ECO:0000255" key="1">
    <source>
        <dbReference type="HAMAP-Rule" id="MF_01338"/>
    </source>
</evidence>